<organism>
    <name type="scientific">Escherichia coli (strain K12)</name>
    <dbReference type="NCBI Taxonomy" id="83333"/>
    <lineage>
        <taxon>Bacteria</taxon>
        <taxon>Pseudomonadati</taxon>
        <taxon>Pseudomonadota</taxon>
        <taxon>Gammaproteobacteria</taxon>
        <taxon>Enterobacterales</taxon>
        <taxon>Enterobacteriaceae</taxon>
        <taxon>Escherichia</taxon>
    </lineage>
</organism>
<comment type="miscellaneous">
    <text evidence="1">Missing up to 300 C-terminal residues compared to orthologs.</text>
</comment>
<dbReference type="EMBL" id="U00096">
    <property type="protein sequence ID" value="AYC08186.1"/>
    <property type="molecule type" value="Genomic_DNA"/>
</dbReference>
<dbReference type="EMBL" id="AP009048">
    <property type="protein sequence ID" value="BAA35363.1"/>
    <property type="molecule type" value="Genomic_DNA"/>
</dbReference>
<dbReference type="PIR" id="T48916">
    <property type="entry name" value="T48916"/>
</dbReference>
<dbReference type="SMR" id="Q2EEQ8"/>
<dbReference type="BioGRID" id="4261602">
    <property type="interactions" value="103"/>
</dbReference>
<dbReference type="FunCoup" id="Q2EEQ8">
    <property type="interactions" value="17"/>
</dbReference>
<dbReference type="EnsemblBacteria" id="AYC08186">
    <property type="protein sequence ID" value="AYC08186"/>
    <property type="gene ID" value="b4514"/>
</dbReference>
<dbReference type="KEGG" id="ecj:JW0694"/>
<dbReference type="KEGG" id="ecoc:C3026_03520"/>
<dbReference type="PATRIC" id="fig|83333.103.peg.1477"/>
<dbReference type="eggNOG" id="COG5433">
    <property type="taxonomic scope" value="Bacteria"/>
</dbReference>
<dbReference type="HOGENOM" id="CLU_046404_5_2_6"/>
<dbReference type="InParanoid" id="Q2EEQ8"/>
<dbReference type="OMA" id="QAWKVEN"/>
<dbReference type="BioCyc" id="EcoCyc:MONOMER0-2662"/>
<dbReference type="PRO" id="PR:Q2EEQ8"/>
<dbReference type="Proteomes" id="UP000000625">
    <property type="component" value="Chromosome"/>
</dbReference>
<dbReference type="InterPro" id="IPR051698">
    <property type="entry name" value="Transposase_11-like"/>
</dbReference>
<dbReference type="InterPro" id="IPR032806">
    <property type="entry name" value="YbfD_N"/>
</dbReference>
<dbReference type="PANTHER" id="PTHR30298">
    <property type="entry name" value="H REPEAT-ASSOCIATED PREDICTED TRANSPOSASE"/>
    <property type="match status" value="1"/>
</dbReference>
<dbReference type="PANTHER" id="PTHR30298:SF0">
    <property type="entry name" value="PROTEIN YBFL-RELATED"/>
    <property type="match status" value="1"/>
</dbReference>
<dbReference type="Pfam" id="PF13808">
    <property type="entry name" value="DDE_Tnp_1_assoc"/>
    <property type="match status" value="1"/>
</dbReference>
<feature type="chain" id="PRO_0000252170" description="Inactive transposase YbfQ">
    <location>
        <begin position="1"/>
        <end position="84"/>
    </location>
</feature>
<proteinExistence type="predicted"/>
<reference key="1">
    <citation type="journal article" date="1997" name="Science">
        <title>The complete genome sequence of Escherichia coli K-12.</title>
        <authorList>
            <person name="Blattner F.R."/>
            <person name="Plunkett G. III"/>
            <person name="Bloch C.A."/>
            <person name="Perna N.T."/>
            <person name="Burland V."/>
            <person name="Riley M."/>
            <person name="Collado-Vides J."/>
            <person name="Glasner J.D."/>
            <person name="Rode C.K."/>
            <person name="Mayhew G.F."/>
            <person name="Gregor J."/>
            <person name="Davis N.W."/>
            <person name="Kirkpatrick H.A."/>
            <person name="Goeden M.A."/>
            <person name="Rose D.J."/>
            <person name="Mau B."/>
            <person name="Shao Y."/>
        </authorList>
    </citation>
    <scope>NUCLEOTIDE SEQUENCE [LARGE SCALE GENOMIC DNA]</scope>
    <source>
        <strain>K12 / MG1655 / ATCC 47076</strain>
    </source>
</reference>
<reference key="2">
    <citation type="journal article" date="2006" name="Mol. Syst. Biol.">
        <title>Highly accurate genome sequences of Escherichia coli K-12 strains MG1655 and W3110.</title>
        <authorList>
            <person name="Hayashi K."/>
            <person name="Morooka N."/>
            <person name="Yamamoto Y."/>
            <person name="Fujita K."/>
            <person name="Isono K."/>
            <person name="Choi S."/>
            <person name="Ohtsubo E."/>
            <person name="Baba T."/>
            <person name="Wanner B.L."/>
            <person name="Mori H."/>
            <person name="Horiuchi T."/>
        </authorList>
    </citation>
    <scope>NUCLEOTIDE SEQUENCE [LARGE SCALE GENOMIC DNA]</scope>
    <source>
        <strain>K12 / W3110 / ATCC 27325 / DSM 5911</strain>
    </source>
</reference>
<gene>
    <name type="primary">ybfQ</name>
    <name type="ordered locus">b4514</name>
    <name type="ordered locus">JW0694</name>
</gene>
<sequence length="84" mass="9555">MELKKLMEHISITPDYRQAWKVVHKLSDILLLTICAVISGAEGWEDIEDFGETHLDFLKQYGDFENGIPVHDTIARVVSQGKIT</sequence>
<protein>
    <recommendedName>
        <fullName>Inactive transposase YbfQ</fullName>
    </recommendedName>
</protein>
<evidence type="ECO:0000305" key="1"/>
<keyword id="KW-1185">Reference proteome</keyword>
<name>YBFQ_ECOLI</name>
<accession>Q2EEQ8</accession>
<accession>A0A385XJC0</accession>
<accession>Q9ZBC8</accession>